<accession>Q9M8K6</accession>
<accession>A0MEU5</accession>
<dbReference type="EMBL" id="AF488580">
    <property type="status" value="NOT_ANNOTATED_CDS"/>
    <property type="molecule type" value="mRNA"/>
</dbReference>
<dbReference type="EMBL" id="DQ863645">
    <property type="protein sequence ID" value="ABI74926.1"/>
    <property type="molecule type" value="mRNA"/>
</dbReference>
<dbReference type="EMBL" id="DQ864972">
    <property type="protein sequence ID" value="ABI34465.1"/>
    <property type="molecule type" value="Genomic_DNA"/>
</dbReference>
<dbReference type="EMBL" id="AC018907">
    <property type="protein sequence ID" value="AAF30305.1"/>
    <property type="molecule type" value="Genomic_DNA"/>
</dbReference>
<dbReference type="EMBL" id="CP002686">
    <property type="protein sequence ID" value="AEE74347.1"/>
    <property type="molecule type" value="Genomic_DNA"/>
</dbReference>
<dbReference type="EMBL" id="DQ446639">
    <property type="protein sequence ID" value="ABE65920.1"/>
    <property type="molecule type" value="mRNA"/>
</dbReference>
<dbReference type="EMBL" id="DQ653068">
    <property type="protein sequence ID" value="ABK28545.1"/>
    <property type="status" value="ALT_SEQ"/>
    <property type="molecule type" value="mRNA"/>
</dbReference>
<dbReference type="RefSeq" id="NP_187263.1">
    <property type="nucleotide sequence ID" value="NM_111487.3"/>
</dbReference>
<dbReference type="SMR" id="Q9M8K6"/>
<dbReference type="BioGRID" id="5120">
    <property type="interactions" value="5"/>
</dbReference>
<dbReference type="FunCoup" id="Q9M8K6">
    <property type="interactions" value="115"/>
</dbReference>
<dbReference type="IntAct" id="Q9M8K6">
    <property type="interactions" value="2"/>
</dbReference>
<dbReference type="STRING" id="3702.Q9M8K6"/>
<dbReference type="PaxDb" id="3702-AT3G06120.1"/>
<dbReference type="EnsemblPlants" id="AT3G06120.1">
    <property type="protein sequence ID" value="AT3G06120.1"/>
    <property type="gene ID" value="AT3G06120"/>
</dbReference>
<dbReference type="GeneID" id="819785"/>
<dbReference type="Gramene" id="AT3G06120.1">
    <property type="protein sequence ID" value="AT3G06120.1"/>
    <property type="gene ID" value="AT3G06120"/>
</dbReference>
<dbReference type="KEGG" id="ath:AT3G06120"/>
<dbReference type="Araport" id="AT3G06120"/>
<dbReference type="TAIR" id="AT3G06120">
    <property type="gene designation" value="MUTE"/>
</dbReference>
<dbReference type="eggNOG" id="ENOG502QPVA">
    <property type="taxonomic scope" value="Eukaryota"/>
</dbReference>
<dbReference type="HOGENOM" id="CLU_044652_4_1_1"/>
<dbReference type="InParanoid" id="Q9M8K6"/>
<dbReference type="OMA" id="VQQSFCS"/>
<dbReference type="OrthoDB" id="675169at2759"/>
<dbReference type="PhylomeDB" id="Q9M8K6"/>
<dbReference type="PRO" id="PR:Q9M8K6"/>
<dbReference type="Proteomes" id="UP000006548">
    <property type="component" value="Chromosome 3"/>
</dbReference>
<dbReference type="ExpressionAtlas" id="Q9M8K6">
    <property type="expression patterns" value="baseline and differential"/>
</dbReference>
<dbReference type="GO" id="GO:0005634">
    <property type="term" value="C:nucleus"/>
    <property type="evidence" value="ECO:0000314"/>
    <property type="project" value="TAIR"/>
</dbReference>
<dbReference type="GO" id="GO:0003700">
    <property type="term" value="F:DNA-binding transcription factor activity"/>
    <property type="evidence" value="ECO:0000250"/>
    <property type="project" value="TAIR"/>
</dbReference>
<dbReference type="GO" id="GO:0046983">
    <property type="term" value="F:protein dimerization activity"/>
    <property type="evidence" value="ECO:0007669"/>
    <property type="project" value="InterPro"/>
</dbReference>
<dbReference type="GO" id="GO:0000976">
    <property type="term" value="F:transcription cis-regulatory region binding"/>
    <property type="evidence" value="ECO:0000353"/>
    <property type="project" value="TAIR"/>
</dbReference>
<dbReference type="GO" id="GO:0009913">
    <property type="term" value="P:epidermal cell differentiation"/>
    <property type="evidence" value="ECO:0000315"/>
    <property type="project" value="TAIR"/>
</dbReference>
<dbReference type="GO" id="GO:0010052">
    <property type="term" value="P:guard cell differentiation"/>
    <property type="evidence" value="ECO:0007669"/>
    <property type="project" value="InterPro"/>
</dbReference>
<dbReference type="GO" id="GO:0010374">
    <property type="term" value="P:stomatal complex development"/>
    <property type="evidence" value="ECO:0000315"/>
    <property type="project" value="TAIR"/>
</dbReference>
<dbReference type="CDD" id="cd11448">
    <property type="entry name" value="bHLH_AtFAMA_like"/>
    <property type="match status" value="1"/>
</dbReference>
<dbReference type="FunFam" id="4.10.280.10:FF:000064">
    <property type="entry name" value="Transcription factor MUTE"/>
    <property type="match status" value="1"/>
</dbReference>
<dbReference type="Gene3D" id="4.10.280.10">
    <property type="entry name" value="Helix-loop-helix DNA-binding domain"/>
    <property type="match status" value="1"/>
</dbReference>
<dbReference type="InterPro" id="IPR011598">
    <property type="entry name" value="bHLH_dom"/>
</dbReference>
<dbReference type="InterPro" id="IPR044283">
    <property type="entry name" value="FAMA/SPEECHLESS/MUTE-like"/>
</dbReference>
<dbReference type="InterPro" id="IPR036638">
    <property type="entry name" value="HLH_DNA-bd_sf"/>
</dbReference>
<dbReference type="PANTHER" id="PTHR46684">
    <property type="entry name" value="TRANSCRIPTION FACTOR FAMA"/>
    <property type="match status" value="1"/>
</dbReference>
<dbReference type="PANTHER" id="PTHR46684:SF1">
    <property type="entry name" value="TRANSCRIPTION FACTOR MUTE"/>
    <property type="match status" value="1"/>
</dbReference>
<dbReference type="Pfam" id="PF00010">
    <property type="entry name" value="HLH"/>
    <property type="match status" value="1"/>
</dbReference>
<dbReference type="SMART" id="SM00353">
    <property type="entry name" value="HLH"/>
    <property type="match status" value="1"/>
</dbReference>
<dbReference type="SUPFAM" id="SSF47459">
    <property type="entry name" value="HLH, helix-loop-helix DNA-binding domain"/>
    <property type="match status" value="1"/>
</dbReference>
<dbReference type="PROSITE" id="PS50888">
    <property type="entry name" value="BHLH"/>
    <property type="match status" value="1"/>
</dbReference>
<comment type="function">
    <text evidence="3 4">Transcription factor. Together with FMA and SPCH, regulates the stomata formation. Required for the differentiation of stomatal guard cells, by promoting successive asymmetric cell divisions and the formation of guard mother cells. Promotes the conversion of the leaf epidermis into stomata.</text>
</comment>
<comment type="subunit">
    <text evidence="5">Homodimer.</text>
</comment>
<comment type="subcellular location">
    <subcellularLocation>
        <location evidence="1 4">Nucleus</location>
    </subcellularLocation>
</comment>
<comment type="tissue specificity">
    <text evidence="2 3">Leaf epidermis and flowers.</text>
</comment>
<comment type="developmental stage">
    <text evidence="3 4">Strongly expressed in meristemoids and at lower levels in guard mother cells (GMCs) and guard cells.</text>
</comment>
<comment type="induction">
    <text evidence="2">By UV, flagellin, and jasmonic acid (JA) treatments.</text>
</comment>
<comment type="sequence caution" evidence="5">
    <conflict type="erroneous termination">
        <sequence resource="EMBL-CDS" id="ABK28545"/>
    </conflict>
    <text>Extended C-terminus.</text>
</comment>
<keyword id="KW-0217">Developmental protein</keyword>
<keyword id="KW-0238">DNA-binding</keyword>
<keyword id="KW-0539">Nucleus</keyword>
<keyword id="KW-1185">Reference proteome</keyword>
<keyword id="KW-0804">Transcription</keyword>
<keyword id="KW-0805">Transcription regulation</keyword>
<reference key="1">
    <citation type="journal article" date="2003" name="Mol. Biol. Evol.">
        <title>The basic helix-loop-helix transcription factor family in plants: a genome-wide study of protein structure and functional diversity.</title>
        <authorList>
            <person name="Heim M.A."/>
            <person name="Jakoby M."/>
            <person name="Werber M."/>
            <person name="Martin C."/>
            <person name="Weisshaar B."/>
            <person name="Bailey P.C."/>
        </authorList>
    </citation>
    <scope>NUCLEOTIDE SEQUENCE [MRNA]</scope>
    <scope>TISSUE SPECIFICITY</scope>
    <scope>INDUCTION</scope>
    <scope>GENE FAMILY</scope>
    <scope>NOMENCLATURE</scope>
    <source>
        <strain>cv. Columbia</strain>
        <tissue>Flower</tissue>
    </source>
</reference>
<reference key="2">
    <citation type="journal article" date="2007" name="Nature">
        <title>Termination of asymmetric cell division and differentiation of stomata.</title>
        <authorList>
            <person name="Pillitteri L.J."/>
            <person name="Sloan D.B."/>
            <person name="Bogenschutz N.L."/>
            <person name="Torii K.U."/>
        </authorList>
    </citation>
    <scope>NUCLEOTIDE SEQUENCE [GENOMIC DNA / MRNA]</scope>
    <scope>FUNCTION</scope>
    <scope>SUBCELLULAR LOCATION</scope>
    <scope>DEVELOPMENTAL STAGE</scope>
    <source>
        <strain>cv. Columbia</strain>
    </source>
</reference>
<reference key="3">
    <citation type="journal article" date="2000" name="Nature">
        <title>Sequence and analysis of chromosome 3 of the plant Arabidopsis thaliana.</title>
        <authorList>
            <person name="Salanoubat M."/>
            <person name="Lemcke K."/>
            <person name="Rieger M."/>
            <person name="Ansorge W."/>
            <person name="Unseld M."/>
            <person name="Fartmann B."/>
            <person name="Valle G."/>
            <person name="Bloecker H."/>
            <person name="Perez-Alonso M."/>
            <person name="Obermaier B."/>
            <person name="Delseny M."/>
            <person name="Boutry M."/>
            <person name="Grivell L.A."/>
            <person name="Mache R."/>
            <person name="Puigdomenech P."/>
            <person name="De Simone V."/>
            <person name="Choisne N."/>
            <person name="Artiguenave F."/>
            <person name="Robert C."/>
            <person name="Brottier P."/>
            <person name="Wincker P."/>
            <person name="Cattolico L."/>
            <person name="Weissenbach J."/>
            <person name="Saurin W."/>
            <person name="Quetier F."/>
            <person name="Schaefer M."/>
            <person name="Mueller-Auer S."/>
            <person name="Gabel C."/>
            <person name="Fuchs M."/>
            <person name="Benes V."/>
            <person name="Wurmbach E."/>
            <person name="Drzonek H."/>
            <person name="Erfle H."/>
            <person name="Jordan N."/>
            <person name="Bangert S."/>
            <person name="Wiedelmann R."/>
            <person name="Kranz H."/>
            <person name="Voss H."/>
            <person name="Holland R."/>
            <person name="Brandt P."/>
            <person name="Nyakatura G."/>
            <person name="Vezzi A."/>
            <person name="D'Angelo M."/>
            <person name="Pallavicini A."/>
            <person name="Toppo S."/>
            <person name="Simionati B."/>
            <person name="Conrad A."/>
            <person name="Hornischer K."/>
            <person name="Kauer G."/>
            <person name="Loehnert T.-H."/>
            <person name="Nordsiek G."/>
            <person name="Reichelt J."/>
            <person name="Scharfe M."/>
            <person name="Schoen O."/>
            <person name="Bargues M."/>
            <person name="Terol J."/>
            <person name="Climent J."/>
            <person name="Navarro P."/>
            <person name="Collado C."/>
            <person name="Perez-Perez A."/>
            <person name="Ottenwaelder B."/>
            <person name="Duchemin D."/>
            <person name="Cooke R."/>
            <person name="Laudie M."/>
            <person name="Berger-Llauro C."/>
            <person name="Purnelle B."/>
            <person name="Masuy D."/>
            <person name="de Haan M."/>
            <person name="Maarse A.C."/>
            <person name="Alcaraz J.-P."/>
            <person name="Cottet A."/>
            <person name="Casacuberta E."/>
            <person name="Monfort A."/>
            <person name="Argiriou A."/>
            <person name="Flores M."/>
            <person name="Liguori R."/>
            <person name="Vitale D."/>
            <person name="Mannhaupt G."/>
            <person name="Haase D."/>
            <person name="Schoof H."/>
            <person name="Rudd S."/>
            <person name="Zaccaria P."/>
            <person name="Mewes H.-W."/>
            <person name="Mayer K.F.X."/>
            <person name="Kaul S."/>
            <person name="Town C.D."/>
            <person name="Koo H.L."/>
            <person name="Tallon L.J."/>
            <person name="Jenkins J."/>
            <person name="Rooney T."/>
            <person name="Rizzo M."/>
            <person name="Walts A."/>
            <person name="Utterback T."/>
            <person name="Fujii C.Y."/>
            <person name="Shea T.P."/>
            <person name="Creasy T.H."/>
            <person name="Haas B."/>
            <person name="Maiti R."/>
            <person name="Wu D."/>
            <person name="Peterson J."/>
            <person name="Van Aken S."/>
            <person name="Pai G."/>
            <person name="Militscher J."/>
            <person name="Sellers P."/>
            <person name="Gill J.E."/>
            <person name="Feldblyum T.V."/>
            <person name="Preuss D."/>
            <person name="Lin X."/>
            <person name="Nierman W.C."/>
            <person name="Salzberg S.L."/>
            <person name="White O."/>
            <person name="Venter J.C."/>
            <person name="Fraser C.M."/>
            <person name="Kaneko T."/>
            <person name="Nakamura Y."/>
            <person name="Sato S."/>
            <person name="Kato T."/>
            <person name="Asamizu E."/>
            <person name="Sasamoto S."/>
            <person name="Kimura T."/>
            <person name="Idesawa K."/>
            <person name="Kawashima K."/>
            <person name="Kishida Y."/>
            <person name="Kiyokawa C."/>
            <person name="Kohara M."/>
            <person name="Matsumoto M."/>
            <person name="Matsuno A."/>
            <person name="Muraki A."/>
            <person name="Nakayama S."/>
            <person name="Nakazaki N."/>
            <person name="Shinpo S."/>
            <person name="Takeuchi C."/>
            <person name="Wada T."/>
            <person name="Watanabe A."/>
            <person name="Yamada M."/>
            <person name="Yasuda M."/>
            <person name="Tabata S."/>
        </authorList>
    </citation>
    <scope>NUCLEOTIDE SEQUENCE [LARGE SCALE GENOMIC DNA]</scope>
    <source>
        <strain>cv. Columbia</strain>
    </source>
</reference>
<reference key="4">
    <citation type="journal article" date="2017" name="Plant J.">
        <title>Araport11: a complete reannotation of the Arabidopsis thaliana reference genome.</title>
        <authorList>
            <person name="Cheng C.Y."/>
            <person name="Krishnakumar V."/>
            <person name="Chan A.P."/>
            <person name="Thibaud-Nissen F."/>
            <person name="Schobel S."/>
            <person name="Town C.D."/>
        </authorList>
    </citation>
    <scope>GENOME REANNOTATION</scope>
    <source>
        <strain>cv. Columbia</strain>
    </source>
</reference>
<reference key="5">
    <citation type="journal article" date="2006" name="Plant Biotechnol. J.">
        <title>Simultaneous high-throughput recombinational cloning of open reading frames in closed and open configurations.</title>
        <authorList>
            <person name="Underwood B.A."/>
            <person name="Vanderhaeghen R."/>
            <person name="Whitford R."/>
            <person name="Town C.D."/>
            <person name="Hilson P."/>
        </authorList>
    </citation>
    <scope>NUCLEOTIDE SEQUENCE [LARGE SCALE MRNA]</scope>
    <source>
        <strain>cv. Columbia</strain>
    </source>
</reference>
<reference key="6">
    <citation type="journal article" date="2003" name="Plant Cell">
        <title>The Arabidopsis basic/helix-loop-helix transcription factor family.</title>
        <authorList>
            <person name="Toledo-Ortiz G."/>
            <person name="Huq E."/>
            <person name="Quail P.H."/>
        </authorList>
    </citation>
    <scope>GENE FAMILY</scope>
</reference>
<reference key="7">
    <citation type="journal article" date="2003" name="Plant Cell">
        <title>Update on the basic helix-loop-helix transcription factor gene family in Arabidopsis thaliana.</title>
        <authorList>
            <person name="Bailey P.C."/>
            <person name="Martin C."/>
            <person name="Toledo-Ortiz G."/>
            <person name="Quail P.H."/>
            <person name="Huq E."/>
            <person name="Heim M.A."/>
            <person name="Jakoby M."/>
            <person name="Werber M."/>
            <person name="Weisshaar B."/>
        </authorList>
    </citation>
    <scope>GENE FAMILY</scope>
    <scope>NOMENCLATURE</scope>
</reference>
<reference key="8">
    <citation type="journal article" date="2007" name="Bioessays">
        <title>Breaking the silence: three bHLH proteins direct cell-fate decisions during stomatal development.</title>
        <authorList>
            <person name="Pillitteri L.J."/>
            <person name="Torii K.U."/>
        </authorList>
    </citation>
    <scope>REVIEW</scope>
</reference>
<reference key="9">
    <citation type="journal article" date="2007" name="Nature">
        <title>Transcription factor control of asymmetric cell divisions that establish the stomatal lineage.</title>
        <authorList>
            <person name="MacAlister C.A."/>
            <person name="Ohashi-Ito K."/>
            <person name="Bergmann D.C."/>
        </authorList>
    </citation>
    <scope>FUNCTION</scope>
    <scope>TISSUE SPECIFICITY</scope>
    <scope>DEVELOPMENTAL STAGE</scope>
</reference>
<reference key="10">
    <citation type="journal article" date="2007" name="Trends Plant Sci.">
        <title>bHLH proteins know when to make a stoma.</title>
        <authorList>
            <person name="Serna L."/>
        </authorList>
    </citation>
    <scope>REVIEW</scope>
</reference>
<organism>
    <name type="scientific">Arabidopsis thaliana</name>
    <name type="common">Mouse-ear cress</name>
    <dbReference type="NCBI Taxonomy" id="3702"/>
    <lineage>
        <taxon>Eukaryota</taxon>
        <taxon>Viridiplantae</taxon>
        <taxon>Streptophyta</taxon>
        <taxon>Embryophyta</taxon>
        <taxon>Tracheophyta</taxon>
        <taxon>Spermatophyta</taxon>
        <taxon>Magnoliopsida</taxon>
        <taxon>eudicotyledons</taxon>
        <taxon>Gunneridae</taxon>
        <taxon>Pentapetalae</taxon>
        <taxon>rosids</taxon>
        <taxon>malvids</taxon>
        <taxon>Brassicales</taxon>
        <taxon>Brassicaceae</taxon>
        <taxon>Camelineae</taxon>
        <taxon>Arabidopsis</taxon>
    </lineage>
</organism>
<name>MUTE_ARATH</name>
<protein>
    <recommendedName>
        <fullName>Transcription factor MUTE</fullName>
    </recommendedName>
    <alternativeName>
        <fullName>Basic helix-loop-helix protein 45</fullName>
        <shortName>AtbHLH45</shortName>
        <shortName>bHLH 45</shortName>
    </alternativeName>
    <alternativeName>
        <fullName>Transcription factor EN 20</fullName>
    </alternativeName>
    <alternativeName>
        <fullName>bHLH transcription factor bHLH045</fullName>
    </alternativeName>
</protein>
<evidence type="ECO:0000255" key="1">
    <source>
        <dbReference type="PROSITE-ProRule" id="PRU00981"/>
    </source>
</evidence>
<evidence type="ECO:0000269" key="2">
    <source>
    </source>
</evidence>
<evidence type="ECO:0000269" key="3">
    <source>
    </source>
</evidence>
<evidence type="ECO:0000269" key="4">
    <source>
    </source>
</evidence>
<evidence type="ECO:0000305" key="5"/>
<sequence length="202" mass="22843">MSHIAVERNRRRQMNEHLKSLRSLTPCFYIKRGDQASIIGGVIEFIKELQQLVQVLESKKRRKTLNRPSFPYDHQTIEPSSLGAATTRVPFSRIENVMTTSTFKEVGACCNSPHANVEAKISGSNVVLRVVSRRIVGQLVKIISVLEKLSFQVLHLNISSMEETVLYFFVVKIGLECHLSLEELTLEVQKSFVSDEVIVSTN</sequence>
<proteinExistence type="evidence at transcript level"/>
<feature type="chain" id="PRO_0000358849" description="Transcription factor MUTE">
    <location>
        <begin position="1"/>
        <end position="202"/>
    </location>
</feature>
<feature type="domain" description="bHLH" evidence="1">
    <location>
        <begin position="1"/>
        <end position="49"/>
    </location>
</feature>
<gene>
    <name type="primary">MUTE</name>
    <name type="synonym">BHLH45</name>
    <name type="synonym">EN20</name>
    <name type="ordered locus">At3g06120</name>
    <name type="ORF">F28L1.6</name>
</gene>